<organism>
    <name type="scientific">Burkholderia thailandensis (strain ATCC 700388 / DSM 13276 / CCUG 48851 / CIP 106301 / E264)</name>
    <dbReference type="NCBI Taxonomy" id="271848"/>
    <lineage>
        <taxon>Bacteria</taxon>
        <taxon>Pseudomonadati</taxon>
        <taxon>Pseudomonadota</taxon>
        <taxon>Betaproteobacteria</taxon>
        <taxon>Burkholderiales</taxon>
        <taxon>Burkholderiaceae</taxon>
        <taxon>Burkholderia</taxon>
        <taxon>pseudomallei group</taxon>
    </lineage>
</organism>
<sequence length="256" mass="28535">MRNSPVSPGPGYAPSRGAARTRKRGVARWLAYAGGVFAGAWLATQLYYVAQIAAWSVIDPGSSAFMRADAWRLSNAQPAVPIRHRWVPYDKISRNLKRAVIASEDADFANNSGYEVDAILQAWEKNRARGRIVSGGSTITQQLARNLFLSGERSYIRKGQELIITWMLETLLDKERIFEIYLNSVEFGRGVYGAEAAAQYYYRIPASRLSAWQSARLAVMLPNPKYFDAHRSSPYLAQRASVIARRMGAAELPASQ</sequence>
<gene>
    <name evidence="1" type="primary">mtgA</name>
    <name type="ordered locus">BTH_I1172</name>
</gene>
<protein>
    <recommendedName>
        <fullName evidence="1">Biosynthetic peptidoglycan transglycosylase</fullName>
        <ecNumber evidence="1">2.4.99.28</ecNumber>
    </recommendedName>
    <alternativeName>
        <fullName evidence="1">Glycan polymerase</fullName>
    </alternativeName>
    <alternativeName>
        <fullName evidence="1">Peptidoglycan glycosyltransferase MtgA</fullName>
        <shortName evidence="1">PGT</shortName>
    </alternativeName>
</protein>
<keyword id="KW-0997">Cell inner membrane</keyword>
<keyword id="KW-1003">Cell membrane</keyword>
<keyword id="KW-0133">Cell shape</keyword>
<keyword id="KW-0961">Cell wall biogenesis/degradation</keyword>
<keyword id="KW-0328">Glycosyltransferase</keyword>
<keyword id="KW-0472">Membrane</keyword>
<keyword id="KW-0573">Peptidoglycan synthesis</keyword>
<keyword id="KW-0808">Transferase</keyword>
<keyword id="KW-0812">Transmembrane</keyword>
<keyword id="KW-1133">Transmembrane helix</keyword>
<name>MTGA_BURTA</name>
<proteinExistence type="inferred from homology"/>
<comment type="function">
    <text evidence="1">Peptidoglycan polymerase that catalyzes glycan chain elongation from lipid-linked precursors.</text>
</comment>
<comment type="catalytic activity">
    <reaction evidence="1">
        <text>[GlcNAc-(1-&gt;4)-Mur2Ac(oyl-L-Ala-gamma-D-Glu-L-Lys-D-Ala-D-Ala)](n)-di-trans,octa-cis-undecaprenyl diphosphate + beta-D-GlcNAc-(1-&gt;4)-Mur2Ac(oyl-L-Ala-gamma-D-Glu-L-Lys-D-Ala-D-Ala)-di-trans,octa-cis-undecaprenyl diphosphate = [GlcNAc-(1-&gt;4)-Mur2Ac(oyl-L-Ala-gamma-D-Glu-L-Lys-D-Ala-D-Ala)](n+1)-di-trans,octa-cis-undecaprenyl diphosphate + di-trans,octa-cis-undecaprenyl diphosphate + H(+)</text>
        <dbReference type="Rhea" id="RHEA:23708"/>
        <dbReference type="Rhea" id="RHEA-COMP:9602"/>
        <dbReference type="Rhea" id="RHEA-COMP:9603"/>
        <dbReference type="ChEBI" id="CHEBI:15378"/>
        <dbReference type="ChEBI" id="CHEBI:58405"/>
        <dbReference type="ChEBI" id="CHEBI:60033"/>
        <dbReference type="ChEBI" id="CHEBI:78435"/>
        <dbReference type="EC" id="2.4.99.28"/>
    </reaction>
</comment>
<comment type="pathway">
    <text evidence="1">Cell wall biogenesis; peptidoglycan biosynthesis.</text>
</comment>
<comment type="subcellular location">
    <subcellularLocation>
        <location evidence="1">Cell inner membrane</location>
        <topology evidence="1">Single-pass membrane protein</topology>
    </subcellularLocation>
</comment>
<comment type="similarity">
    <text evidence="1">Belongs to the glycosyltransferase 51 family.</text>
</comment>
<dbReference type="EC" id="2.4.99.28" evidence="1"/>
<dbReference type="EMBL" id="CP000086">
    <property type="protein sequence ID" value="ABC39319.1"/>
    <property type="molecule type" value="Genomic_DNA"/>
</dbReference>
<dbReference type="RefSeq" id="WP_009888978.1">
    <property type="nucleotide sequence ID" value="NZ_CP008785.1"/>
</dbReference>
<dbReference type="SMR" id="Q2SZD0"/>
<dbReference type="CAZy" id="GT51">
    <property type="family name" value="Glycosyltransferase Family 51"/>
</dbReference>
<dbReference type="GeneID" id="45120922"/>
<dbReference type="KEGG" id="bte:BTH_I1172"/>
<dbReference type="HOGENOM" id="CLU_006354_1_0_4"/>
<dbReference type="UniPathway" id="UPA00219"/>
<dbReference type="Proteomes" id="UP000001930">
    <property type="component" value="Chromosome I"/>
</dbReference>
<dbReference type="GO" id="GO:0009274">
    <property type="term" value="C:peptidoglycan-based cell wall"/>
    <property type="evidence" value="ECO:0007669"/>
    <property type="project" value="InterPro"/>
</dbReference>
<dbReference type="GO" id="GO:0005886">
    <property type="term" value="C:plasma membrane"/>
    <property type="evidence" value="ECO:0007669"/>
    <property type="project" value="UniProtKB-SubCell"/>
</dbReference>
<dbReference type="GO" id="GO:0016763">
    <property type="term" value="F:pentosyltransferase activity"/>
    <property type="evidence" value="ECO:0007669"/>
    <property type="project" value="InterPro"/>
</dbReference>
<dbReference type="GO" id="GO:0008955">
    <property type="term" value="F:peptidoglycan glycosyltransferase activity"/>
    <property type="evidence" value="ECO:0007669"/>
    <property type="project" value="UniProtKB-UniRule"/>
</dbReference>
<dbReference type="GO" id="GO:0071555">
    <property type="term" value="P:cell wall organization"/>
    <property type="evidence" value="ECO:0007669"/>
    <property type="project" value="UniProtKB-KW"/>
</dbReference>
<dbReference type="GO" id="GO:0009252">
    <property type="term" value="P:peptidoglycan biosynthetic process"/>
    <property type="evidence" value="ECO:0007669"/>
    <property type="project" value="UniProtKB-UniRule"/>
</dbReference>
<dbReference type="GO" id="GO:0008360">
    <property type="term" value="P:regulation of cell shape"/>
    <property type="evidence" value="ECO:0007669"/>
    <property type="project" value="UniProtKB-KW"/>
</dbReference>
<dbReference type="Gene3D" id="1.10.3810.10">
    <property type="entry name" value="Biosynthetic peptidoglycan transglycosylase-like"/>
    <property type="match status" value="1"/>
</dbReference>
<dbReference type="HAMAP" id="MF_00766">
    <property type="entry name" value="PGT_MtgA"/>
    <property type="match status" value="1"/>
</dbReference>
<dbReference type="InterPro" id="IPR001264">
    <property type="entry name" value="Glyco_trans_51"/>
</dbReference>
<dbReference type="InterPro" id="IPR023346">
    <property type="entry name" value="Lysozyme-like_dom_sf"/>
</dbReference>
<dbReference type="InterPro" id="IPR036950">
    <property type="entry name" value="PBP_transglycosylase"/>
</dbReference>
<dbReference type="InterPro" id="IPR011812">
    <property type="entry name" value="Pep_trsgly"/>
</dbReference>
<dbReference type="NCBIfam" id="TIGR02070">
    <property type="entry name" value="mono_pep_trsgly"/>
    <property type="match status" value="1"/>
</dbReference>
<dbReference type="PANTHER" id="PTHR30400:SF0">
    <property type="entry name" value="BIOSYNTHETIC PEPTIDOGLYCAN TRANSGLYCOSYLASE"/>
    <property type="match status" value="1"/>
</dbReference>
<dbReference type="PANTHER" id="PTHR30400">
    <property type="entry name" value="MONOFUNCTIONAL BIOSYNTHETIC PEPTIDOGLYCAN TRANSGLYCOSYLASE"/>
    <property type="match status" value="1"/>
</dbReference>
<dbReference type="Pfam" id="PF00912">
    <property type="entry name" value="Transgly"/>
    <property type="match status" value="1"/>
</dbReference>
<dbReference type="SUPFAM" id="SSF53955">
    <property type="entry name" value="Lysozyme-like"/>
    <property type="match status" value="1"/>
</dbReference>
<feature type="chain" id="PRO_0000257663" description="Biosynthetic peptidoglycan transglycosylase">
    <location>
        <begin position="1"/>
        <end position="256"/>
    </location>
</feature>
<feature type="transmembrane region" description="Helical" evidence="1">
    <location>
        <begin position="26"/>
        <end position="48"/>
    </location>
</feature>
<accession>Q2SZD0</accession>
<reference key="1">
    <citation type="journal article" date="2005" name="BMC Genomics">
        <title>Bacterial genome adaptation to niches: divergence of the potential virulence genes in three Burkholderia species of different survival strategies.</title>
        <authorList>
            <person name="Kim H.S."/>
            <person name="Schell M.A."/>
            <person name="Yu Y."/>
            <person name="Ulrich R.L."/>
            <person name="Sarria S.H."/>
            <person name="Nierman W.C."/>
            <person name="DeShazer D."/>
        </authorList>
    </citation>
    <scope>NUCLEOTIDE SEQUENCE [LARGE SCALE GENOMIC DNA]</scope>
    <source>
        <strain>ATCC 700388 / DSM 13276 / CCUG 48851 / CIP 106301 / E264</strain>
    </source>
</reference>
<evidence type="ECO:0000255" key="1">
    <source>
        <dbReference type="HAMAP-Rule" id="MF_00766"/>
    </source>
</evidence>